<feature type="signal peptide" evidence="3">
    <location>
        <begin position="1"/>
        <end position="18"/>
    </location>
</feature>
<feature type="propeptide" id="PRO_0000003765" evidence="3">
    <location>
        <begin position="19"/>
        <end position="53"/>
    </location>
</feature>
<feature type="chain" id="PRO_0000003766" description="Cadherin-6">
    <location>
        <begin position="54"/>
        <end position="789"/>
    </location>
</feature>
<feature type="topological domain" description="Extracellular" evidence="3">
    <location>
        <begin position="54"/>
        <end position="615"/>
    </location>
</feature>
<feature type="transmembrane region" description="Helical" evidence="3">
    <location>
        <begin position="616"/>
        <end position="636"/>
    </location>
</feature>
<feature type="topological domain" description="Cytoplasmic" evidence="3">
    <location>
        <begin position="637"/>
        <end position="789"/>
    </location>
</feature>
<feature type="domain" description="Cadherin 1" evidence="4">
    <location>
        <begin position="54"/>
        <end position="159"/>
    </location>
</feature>
<feature type="domain" description="Cadherin 2" evidence="4">
    <location>
        <begin position="160"/>
        <end position="268"/>
    </location>
</feature>
<feature type="domain" description="Cadherin 3" evidence="4">
    <location>
        <begin position="269"/>
        <end position="383"/>
    </location>
</feature>
<feature type="domain" description="Cadherin 4" evidence="4">
    <location>
        <begin position="384"/>
        <end position="486"/>
    </location>
</feature>
<feature type="domain" description="Cadherin 5" evidence="4">
    <location>
        <begin position="487"/>
        <end position="608"/>
    </location>
</feature>
<feature type="region of interest" description="Disordered" evidence="5">
    <location>
        <begin position="259"/>
        <end position="288"/>
    </location>
</feature>
<feature type="compositionally biased region" description="Polar residues" evidence="5">
    <location>
        <begin position="269"/>
        <end position="279"/>
    </location>
</feature>
<feature type="modified residue" description="Phosphoserine" evidence="6">
    <location>
        <position position="785"/>
    </location>
</feature>
<feature type="modified residue" description="Phosphoserine" evidence="2">
    <location>
        <position position="789"/>
    </location>
</feature>
<feature type="glycosylation site" description="N-linked (GlcNAc...) asparagine" evidence="3">
    <location>
        <position position="255"/>
    </location>
</feature>
<feature type="glycosylation site" description="N-linked (GlcNAc...) asparagine" evidence="3">
    <location>
        <position position="399"/>
    </location>
</feature>
<feature type="glycosylation site" description="N-linked (GlcNAc...) asparagine" evidence="3">
    <location>
        <position position="437"/>
    </location>
</feature>
<feature type="glycosylation site" description="N-linked (GlcNAc...) asparagine" evidence="3">
    <location>
        <position position="455"/>
    </location>
</feature>
<feature type="glycosylation site" description="N-linked (GlcNAc...) asparagine" evidence="3">
    <location>
        <position position="536"/>
    </location>
</feature>
<accession>P55280</accession>
<evidence type="ECO:0000250" key="1"/>
<evidence type="ECO:0000250" key="2">
    <source>
        <dbReference type="UniProtKB" id="P97326"/>
    </source>
</evidence>
<evidence type="ECO:0000255" key="3"/>
<evidence type="ECO:0000255" key="4">
    <source>
        <dbReference type="PROSITE-ProRule" id="PRU00043"/>
    </source>
</evidence>
<evidence type="ECO:0000256" key="5">
    <source>
        <dbReference type="SAM" id="MobiDB-lite"/>
    </source>
</evidence>
<evidence type="ECO:0007744" key="6">
    <source>
    </source>
</evidence>
<protein>
    <recommendedName>
        <fullName>Cadherin-6</fullName>
    </recommendedName>
    <alternativeName>
        <fullName>Kidney cadherin</fullName>
        <shortName>K-cadherin</shortName>
    </alternativeName>
</protein>
<organism>
    <name type="scientific">Rattus norvegicus</name>
    <name type="common">Rat</name>
    <dbReference type="NCBI Taxonomy" id="10116"/>
    <lineage>
        <taxon>Eukaryota</taxon>
        <taxon>Metazoa</taxon>
        <taxon>Chordata</taxon>
        <taxon>Craniata</taxon>
        <taxon>Vertebrata</taxon>
        <taxon>Euteleostomi</taxon>
        <taxon>Mammalia</taxon>
        <taxon>Eutheria</taxon>
        <taxon>Euarchontoglires</taxon>
        <taxon>Glires</taxon>
        <taxon>Rodentia</taxon>
        <taxon>Myomorpha</taxon>
        <taxon>Muroidea</taxon>
        <taxon>Muridae</taxon>
        <taxon>Murinae</taxon>
        <taxon>Rattus</taxon>
    </lineage>
</organism>
<sequence length="789" mass="88341">MRTYRYFLLLFWVGQPYPTFSNPLSKRTSGFPAKRRALELSANSRNELSRSKRSWMWNQFFLLEEYTGSDYQYVGKLHSDQDRGDGSLKYILSGDGAGDLFIINENTGDIQATKRLDREEKPVYILRAQAINRRTGRPVEPESEFIIKIHDINDNEPIFTKDVYTATVPEMADVGTFVVQVTATDADDPTYGNSAKVVYSILQGQPYFSVESETGIIKTALLNMDRENREQYQVVIQAKDMGGQMGGLSGTTTVNITLTDVNDNPPRFPQSTYQFKTPESSPPGTPIGRIKASDADVGENAEIEYSITDGEGHDMFDVITDQETQEGIITVKKLLDFEKKRVYTLKVEASNPHIEPRFLYLGPFKDSATVRIVVDDVDEPPVFSKPAYILQIREDAQINTTIGSVAAQDPDAARNPVKYSVDRHTDMDRIFNIDSGNGSIFTSKLLDRETLLWHNITVIATEINNPKQSSRVPLYIKVLDVNDNAPEFAEFYETFVCEKAKADQLIQTLHAVDKDDPYSGHQFSFSLAPEAASGSNFTIQDNKDNTAGILTRKNGYNRHEMSTYLLPVVISDNDYPVQSSTGTVTVRVCACDHHGNMQSCHAEALIHPTGLSTGALVAILLCIVILLVTVVLFAALRRQRKKEPLIISKEDIRDNIVSYNDEGGGEEDTQAFDIGTLRNPKPWRQQSRRDMVPEALFLPRRTPTARDNTDVRDFISQRLRKMNTDPTAPPYDSLATYAYEGTGSVADSLSSLESVTTDGDQDYGYLSDWGPRFKKLADMYGGMDSDKDS</sequence>
<reference key="1">
    <citation type="journal article" date="1994" name="Cancer Res.">
        <title>Isolation of complementary DNA encoding K-cadherin, a novel rat cadherin preferentially expressed in fetal kidney and kidney carcinoma.</title>
        <authorList>
            <person name="Xiang Y.Y."/>
            <person name="Tanaka M."/>
            <person name="Suzuki M."/>
            <person name="Igarashi H."/>
            <person name="Kiyokawa E."/>
            <person name="Naito Y."/>
            <person name="Ohtawara Y."/>
            <person name="Shen Q."/>
            <person name="Sugimura H."/>
            <person name="Kino I."/>
        </authorList>
    </citation>
    <scope>NUCLEOTIDE SEQUENCE [MRNA]</scope>
    <source>
        <strain>ACI</strain>
        <tissue>Kidney</tissue>
    </source>
</reference>
<reference key="2">
    <citation type="journal article" date="2012" name="Nat. Commun.">
        <title>Quantitative maps of protein phosphorylation sites across 14 different rat organs and tissues.</title>
        <authorList>
            <person name="Lundby A."/>
            <person name="Secher A."/>
            <person name="Lage K."/>
            <person name="Nordsborg N.B."/>
            <person name="Dmytriyev A."/>
            <person name="Lundby C."/>
            <person name="Olsen J.V."/>
        </authorList>
    </citation>
    <scope>PHOSPHORYLATION [LARGE SCALE ANALYSIS] AT SER-785</scope>
    <scope>IDENTIFICATION BY MASS SPECTROMETRY [LARGE SCALE ANALYSIS]</scope>
</reference>
<proteinExistence type="evidence at protein level"/>
<dbReference type="EMBL" id="D25290">
    <property type="protein sequence ID" value="BAA04975.1"/>
    <property type="molecule type" value="mRNA"/>
</dbReference>
<dbReference type="PIR" id="I52701">
    <property type="entry name" value="I52701"/>
</dbReference>
<dbReference type="RefSeq" id="NP_037059.1">
    <property type="nucleotide sequence ID" value="NM_012927.1"/>
</dbReference>
<dbReference type="SMR" id="P55280"/>
<dbReference type="FunCoup" id="P55280">
    <property type="interactions" value="187"/>
</dbReference>
<dbReference type="STRING" id="10116.ENSRNOP00000018246"/>
<dbReference type="GlyCosmos" id="P55280">
    <property type="glycosylation" value="5 sites, No reported glycans"/>
</dbReference>
<dbReference type="GlyGen" id="P55280">
    <property type="glycosylation" value="5 sites, 1 N-linked glycan (1 site), 1 N-linked;o-linked glycan (1 site)"/>
</dbReference>
<dbReference type="iPTMnet" id="P55280"/>
<dbReference type="PhosphoSitePlus" id="P55280"/>
<dbReference type="PaxDb" id="10116-ENSRNOP00000018246"/>
<dbReference type="GeneID" id="25409"/>
<dbReference type="KEGG" id="rno:25409"/>
<dbReference type="AGR" id="RGD:2322"/>
<dbReference type="CTD" id="1004"/>
<dbReference type="RGD" id="2322">
    <property type="gene designation" value="Cdh6"/>
</dbReference>
<dbReference type="eggNOG" id="KOG3594">
    <property type="taxonomic scope" value="Eukaryota"/>
</dbReference>
<dbReference type="InParanoid" id="P55280"/>
<dbReference type="PhylomeDB" id="P55280"/>
<dbReference type="Reactome" id="R-RNO-418990">
    <property type="pathway name" value="Adherens junctions interactions"/>
</dbReference>
<dbReference type="PRO" id="PR:P55280"/>
<dbReference type="Proteomes" id="UP000002494">
    <property type="component" value="Unplaced"/>
</dbReference>
<dbReference type="GO" id="GO:0005912">
    <property type="term" value="C:adherens junction"/>
    <property type="evidence" value="ECO:0000318"/>
    <property type="project" value="GO_Central"/>
</dbReference>
<dbReference type="GO" id="GO:0016342">
    <property type="term" value="C:catenin complex"/>
    <property type="evidence" value="ECO:0000318"/>
    <property type="project" value="GO_Central"/>
</dbReference>
<dbReference type="GO" id="GO:0098978">
    <property type="term" value="C:glutamatergic synapse"/>
    <property type="evidence" value="ECO:0000266"/>
    <property type="project" value="RGD"/>
</dbReference>
<dbReference type="GO" id="GO:0005886">
    <property type="term" value="C:plasma membrane"/>
    <property type="evidence" value="ECO:0000266"/>
    <property type="project" value="RGD"/>
</dbReference>
<dbReference type="GO" id="GO:0045202">
    <property type="term" value="C:synapse"/>
    <property type="evidence" value="ECO:0000266"/>
    <property type="project" value="RGD"/>
</dbReference>
<dbReference type="GO" id="GO:0008013">
    <property type="term" value="F:beta-catenin binding"/>
    <property type="evidence" value="ECO:0000318"/>
    <property type="project" value="GO_Central"/>
</dbReference>
<dbReference type="GO" id="GO:0045296">
    <property type="term" value="F:cadherin binding"/>
    <property type="evidence" value="ECO:0000318"/>
    <property type="project" value="GO_Central"/>
</dbReference>
<dbReference type="GO" id="GO:0005509">
    <property type="term" value="F:calcium ion binding"/>
    <property type="evidence" value="ECO:0007669"/>
    <property type="project" value="InterPro"/>
</dbReference>
<dbReference type="GO" id="GO:0034332">
    <property type="term" value="P:adherens junction organization"/>
    <property type="evidence" value="ECO:0000318"/>
    <property type="project" value="GO_Central"/>
</dbReference>
<dbReference type="GO" id="GO:0016339">
    <property type="term" value="P:calcium-dependent cell-cell adhesion via plasma membrane cell adhesion molecules"/>
    <property type="evidence" value="ECO:0000318"/>
    <property type="project" value="GO_Central"/>
</dbReference>
<dbReference type="GO" id="GO:0016477">
    <property type="term" value="P:cell migration"/>
    <property type="evidence" value="ECO:0000318"/>
    <property type="project" value="GO_Central"/>
</dbReference>
<dbReference type="GO" id="GO:0000902">
    <property type="term" value="P:cell morphogenesis"/>
    <property type="evidence" value="ECO:0000318"/>
    <property type="project" value="GO_Central"/>
</dbReference>
<dbReference type="GO" id="GO:0044331">
    <property type="term" value="P:cell-cell adhesion mediated by cadherin"/>
    <property type="evidence" value="ECO:0000318"/>
    <property type="project" value="GO_Central"/>
</dbReference>
<dbReference type="GO" id="GO:0007043">
    <property type="term" value="P:cell-cell junction assembly"/>
    <property type="evidence" value="ECO:0000318"/>
    <property type="project" value="GO_Central"/>
</dbReference>
<dbReference type="GO" id="GO:0008585">
    <property type="term" value="P:female gonad development"/>
    <property type="evidence" value="ECO:0000270"/>
    <property type="project" value="RGD"/>
</dbReference>
<dbReference type="GO" id="GO:0007156">
    <property type="term" value="P:homophilic cell adhesion via plasma membrane adhesion molecules"/>
    <property type="evidence" value="ECO:0007669"/>
    <property type="project" value="InterPro"/>
</dbReference>
<dbReference type="GO" id="GO:0007219">
    <property type="term" value="P:Notch signaling pathway"/>
    <property type="evidence" value="ECO:0000266"/>
    <property type="project" value="RGD"/>
</dbReference>
<dbReference type="GO" id="GO:0099560">
    <property type="term" value="P:synaptic membrane adhesion"/>
    <property type="evidence" value="ECO:0000266"/>
    <property type="project" value="RGD"/>
</dbReference>
<dbReference type="CDD" id="cd11304">
    <property type="entry name" value="Cadherin_repeat"/>
    <property type="match status" value="5"/>
</dbReference>
<dbReference type="FunFam" id="2.60.40.60:FF:000297">
    <property type="entry name" value="Cadherin 12"/>
    <property type="match status" value="1"/>
</dbReference>
<dbReference type="FunFam" id="2.60.40.60:FF:000009">
    <property type="entry name" value="Cadherin 24"/>
    <property type="match status" value="1"/>
</dbReference>
<dbReference type="FunFam" id="2.60.40.60:FF:000012">
    <property type="entry name" value="Cadherin 24"/>
    <property type="match status" value="1"/>
</dbReference>
<dbReference type="FunFam" id="2.60.40.60:FF:000017">
    <property type="entry name" value="Cadherin 24"/>
    <property type="match status" value="1"/>
</dbReference>
<dbReference type="FunFam" id="2.60.40.60:FF:000014">
    <property type="entry name" value="Cadherin 8"/>
    <property type="match status" value="1"/>
</dbReference>
<dbReference type="FunFam" id="4.10.900.10:FF:000006">
    <property type="entry name" value="Cadherin-9 preproprotein"/>
    <property type="match status" value="1"/>
</dbReference>
<dbReference type="Gene3D" id="2.60.40.60">
    <property type="entry name" value="Cadherins"/>
    <property type="match status" value="5"/>
</dbReference>
<dbReference type="Gene3D" id="4.10.900.10">
    <property type="entry name" value="TCF3-CBD (Catenin binding domain)"/>
    <property type="match status" value="1"/>
</dbReference>
<dbReference type="InterPro" id="IPR039808">
    <property type="entry name" value="Cadherin"/>
</dbReference>
<dbReference type="InterPro" id="IPR002126">
    <property type="entry name" value="Cadherin-like_dom"/>
</dbReference>
<dbReference type="InterPro" id="IPR015919">
    <property type="entry name" value="Cadherin-like_sf"/>
</dbReference>
<dbReference type="InterPro" id="IPR020894">
    <property type="entry name" value="Cadherin_CS"/>
</dbReference>
<dbReference type="InterPro" id="IPR000233">
    <property type="entry name" value="Cadherin_Y-type_LIR"/>
</dbReference>
<dbReference type="InterPro" id="IPR027397">
    <property type="entry name" value="Catenin-bd_sf"/>
</dbReference>
<dbReference type="PANTHER" id="PTHR24027">
    <property type="entry name" value="CADHERIN-23"/>
    <property type="match status" value="1"/>
</dbReference>
<dbReference type="PANTHER" id="PTHR24027:SF322">
    <property type="entry name" value="CADHERIN-6"/>
    <property type="match status" value="1"/>
</dbReference>
<dbReference type="Pfam" id="PF01049">
    <property type="entry name" value="CADH_Y-type_LIR"/>
    <property type="match status" value="1"/>
</dbReference>
<dbReference type="Pfam" id="PF00028">
    <property type="entry name" value="Cadherin"/>
    <property type="match status" value="5"/>
</dbReference>
<dbReference type="PRINTS" id="PR00205">
    <property type="entry name" value="CADHERIN"/>
</dbReference>
<dbReference type="SMART" id="SM00112">
    <property type="entry name" value="CA"/>
    <property type="match status" value="5"/>
</dbReference>
<dbReference type="SUPFAM" id="SSF49313">
    <property type="entry name" value="Cadherin-like"/>
    <property type="match status" value="5"/>
</dbReference>
<dbReference type="PROSITE" id="PS00232">
    <property type="entry name" value="CADHERIN_1"/>
    <property type="match status" value="3"/>
</dbReference>
<dbReference type="PROSITE" id="PS50268">
    <property type="entry name" value="CADHERIN_2"/>
    <property type="match status" value="5"/>
</dbReference>
<keyword id="KW-0106">Calcium</keyword>
<keyword id="KW-0130">Cell adhesion</keyword>
<keyword id="KW-1003">Cell membrane</keyword>
<keyword id="KW-0165">Cleavage on pair of basic residues</keyword>
<keyword id="KW-0325">Glycoprotein</keyword>
<keyword id="KW-0472">Membrane</keyword>
<keyword id="KW-0479">Metal-binding</keyword>
<keyword id="KW-0597">Phosphoprotein</keyword>
<keyword id="KW-1185">Reference proteome</keyword>
<keyword id="KW-0677">Repeat</keyword>
<keyword id="KW-0732">Signal</keyword>
<keyword id="KW-0812">Transmembrane</keyword>
<keyword id="KW-1133">Transmembrane helix</keyword>
<name>CADH6_RAT</name>
<gene>
    <name type="primary">Cdh6</name>
    <name type="synonym">Kcad</name>
</gene>
<comment type="function">
    <text>Cadherins are calcium-dependent cell adhesion proteins. They preferentially interact with themselves in a homophilic manner in connecting cells; cadherins may thus contribute to the sorting of heterogeneous cell types.</text>
</comment>
<comment type="subcellular location">
    <subcellularLocation>
        <location>Cell membrane</location>
        <topology>Single-pass type I membrane protein</topology>
    </subcellularLocation>
</comment>
<comment type="tissue specificity">
    <text>Highly expressed in kidney and brain.</text>
</comment>
<comment type="domain">
    <text evidence="1">Three calcium ions are usually bound at the interface of each cadherin domain and rigidify the connections, imparting a strong curvature to the full-length ectodomain.</text>
</comment>